<dbReference type="EC" id="5.6.1.7" evidence="1"/>
<dbReference type="EMBL" id="AP008971">
    <property type="protein sequence ID" value="BAG08304.1"/>
    <property type="molecule type" value="Genomic_DNA"/>
</dbReference>
<dbReference type="RefSeq" id="WP_012290688.1">
    <property type="nucleotide sequence ID" value="NC_010376.1"/>
</dbReference>
<dbReference type="SMR" id="B0S1R4"/>
<dbReference type="STRING" id="334413.FMG_0886"/>
<dbReference type="KEGG" id="fma:FMG_0886"/>
<dbReference type="eggNOG" id="COG0459">
    <property type="taxonomic scope" value="Bacteria"/>
</dbReference>
<dbReference type="HOGENOM" id="CLU_016503_3_0_9"/>
<dbReference type="Proteomes" id="UP000001319">
    <property type="component" value="Chromosome"/>
</dbReference>
<dbReference type="GO" id="GO:0005737">
    <property type="term" value="C:cytoplasm"/>
    <property type="evidence" value="ECO:0007669"/>
    <property type="project" value="UniProtKB-SubCell"/>
</dbReference>
<dbReference type="GO" id="GO:0005524">
    <property type="term" value="F:ATP binding"/>
    <property type="evidence" value="ECO:0007669"/>
    <property type="project" value="UniProtKB-UniRule"/>
</dbReference>
<dbReference type="GO" id="GO:0140662">
    <property type="term" value="F:ATP-dependent protein folding chaperone"/>
    <property type="evidence" value="ECO:0007669"/>
    <property type="project" value="InterPro"/>
</dbReference>
<dbReference type="GO" id="GO:0016853">
    <property type="term" value="F:isomerase activity"/>
    <property type="evidence" value="ECO:0007669"/>
    <property type="project" value="UniProtKB-KW"/>
</dbReference>
<dbReference type="GO" id="GO:0051082">
    <property type="term" value="F:unfolded protein binding"/>
    <property type="evidence" value="ECO:0007669"/>
    <property type="project" value="UniProtKB-UniRule"/>
</dbReference>
<dbReference type="GO" id="GO:0042026">
    <property type="term" value="P:protein refolding"/>
    <property type="evidence" value="ECO:0007669"/>
    <property type="project" value="UniProtKB-UniRule"/>
</dbReference>
<dbReference type="CDD" id="cd03344">
    <property type="entry name" value="GroEL"/>
    <property type="match status" value="1"/>
</dbReference>
<dbReference type="FunFam" id="3.50.7.10:FF:000001">
    <property type="entry name" value="60 kDa chaperonin"/>
    <property type="match status" value="1"/>
</dbReference>
<dbReference type="Gene3D" id="3.50.7.10">
    <property type="entry name" value="GroEL"/>
    <property type="match status" value="1"/>
</dbReference>
<dbReference type="Gene3D" id="1.10.560.10">
    <property type="entry name" value="GroEL-like equatorial domain"/>
    <property type="match status" value="1"/>
</dbReference>
<dbReference type="Gene3D" id="3.30.260.10">
    <property type="entry name" value="TCP-1-like chaperonin intermediate domain"/>
    <property type="match status" value="1"/>
</dbReference>
<dbReference type="HAMAP" id="MF_00600">
    <property type="entry name" value="CH60"/>
    <property type="match status" value="1"/>
</dbReference>
<dbReference type="InterPro" id="IPR018370">
    <property type="entry name" value="Chaperonin_Cpn60_CS"/>
</dbReference>
<dbReference type="InterPro" id="IPR001844">
    <property type="entry name" value="Cpn60/GroEL"/>
</dbReference>
<dbReference type="InterPro" id="IPR002423">
    <property type="entry name" value="Cpn60/GroEL/TCP-1"/>
</dbReference>
<dbReference type="InterPro" id="IPR027409">
    <property type="entry name" value="GroEL-like_apical_dom_sf"/>
</dbReference>
<dbReference type="InterPro" id="IPR027413">
    <property type="entry name" value="GROEL-like_equatorial_sf"/>
</dbReference>
<dbReference type="InterPro" id="IPR027410">
    <property type="entry name" value="TCP-1-like_intermed_sf"/>
</dbReference>
<dbReference type="NCBIfam" id="TIGR02348">
    <property type="entry name" value="GroEL"/>
    <property type="match status" value="1"/>
</dbReference>
<dbReference type="NCBIfam" id="NF000592">
    <property type="entry name" value="PRK00013.1"/>
    <property type="match status" value="1"/>
</dbReference>
<dbReference type="NCBIfam" id="NF009487">
    <property type="entry name" value="PRK12849.1"/>
    <property type="match status" value="1"/>
</dbReference>
<dbReference type="NCBIfam" id="NF009488">
    <property type="entry name" value="PRK12850.1"/>
    <property type="match status" value="1"/>
</dbReference>
<dbReference type="NCBIfam" id="NF009489">
    <property type="entry name" value="PRK12851.1"/>
    <property type="match status" value="1"/>
</dbReference>
<dbReference type="PANTHER" id="PTHR45633">
    <property type="entry name" value="60 KDA HEAT SHOCK PROTEIN, MITOCHONDRIAL"/>
    <property type="match status" value="1"/>
</dbReference>
<dbReference type="Pfam" id="PF00118">
    <property type="entry name" value="Cpn60_TCP1"/>
    <property type="match status" value="1"/>
</dbReference>
<dbReference type="PRINTS" id="PR00298">
    <property type="entry name" value="CHAPERONIN60"/>
</dbReference>
<dbReference type="SUPFAM" id="SSF52029">
    <property type="entry name" value="GroEL apical domain-like"/>
    <property type="match status" value="1"/>
</dbReference>
<dbReference type="SUPFAM" id="SSF48592">
    <property type="entry name" value="GroEL equatorial domain-like"/>
    <property type="match status" value="1"/>
</dbReference>
<dbReference type="SUPFAM" id="SSF54849">
    <property type="entry name" value="GroEL-intermediate domain like"/>
    <property type="match status" value="1"/>
</dbReference>
<dbReference type="PROSITE" id="PS00296">
    <property type="entry name" value="CHAPERONINS_CPN60"/>
    <property type="match status" value="1"/>
</dbReference>
<organism>
    <name type="scientific">Finegoldia magna (strain ATCC 29328 / DSM 20472 / WAL 2508)</name>
    <name type="common">Peptostreptococcus magnus</name>
    <dbReference type="NCBI Taxonomy" id="334413"/>
    <lineage>
        <taxon>Bacteria</taxon>
        <taxon>Bacillati</taxon>
        <taxon>Bacillota</taxon>
        <taxon>Tissierellia</taxon>
        <taxon>Tissierellales</taxon>
        <taxon>Peptoniphilaceae</taxon>
        <taxon>Finegoldia</taxon>
    </lineage>
</organism>
<comment type="function">
    <text evidence="1">Together with its co-chaperonin GroES, plays an essential role in assisting protein folding. The GroEL-GroES system forms a nano-cage that allows encapsulation of the non-native substrate proteins and provides a physical environment optimized to promote and accelerate protein folding.</text>
</comment>
<comment type="catalytic activity">
    <reaction evidence="1">
        <text>ATP + H2O + a folded polypeptide = ADP + phosphate + an unfolded polypeptide.</text>
        <dbReference type="EC" id="5.6.1.7"/>
    </reaction>
</comment>
<comment type="subunit">
    <text evidence="1">Forms a cylinder of 14 subunits composed of two heptameric rings stacked back-to-back. Interacts with the co-chaperonin GroES.</text>
</comment>
<comment type="subcellular location">
    <subcellularLocation>
        <location evidence="1">Cytoplasm</location>
    </subcellularLocation>
</comment>
<comment type="similarity">
    <text evidence="1">Belongs to the chaperonin (HSP60) family.</text>
</comment>
<reference key="1">
    <citation type="journal article" date="2008" name="DNA Res.">
        <title>Complete genome sequence of Finegoldia magna, an anaerobic opportunistic pathogen.</title>
        <authorList>
            <person name="Goto T."/>
            <person name="Yamashita A."/>
            <person name="Hirakawa H."/>
            <person name="Matsutani M."/>
            <person name="Todo K."/>
            <person name="Ohshima K."/>
            <person name="Toh H."/>
            <person name="Miyamoto K."/>
            <person name="Kuhara S."/>
            <person name="Hattori M."/>
            <person name="Shimizu T."/>
            <person name="Akimoto S."/>
        </authorList>
    </citation>
    <scope>NUCLEOTIDE SEQUENCE [LARGE SCALE GENOMIC DNA]</scope>
    <source>
        <strain>ATCC 29328 / DSM 20472 / WAL 2508</strain>
    </source>
</reference>
<feature type="chain" id="PRO_1000130018" description="Chaperonin GroEL">
    <location>
        <begin position="1"/>
        <end position="539"/>
    </location>
</feature>
<feature type="binding site" evidence="1">
    <location>
        <begin position="29"/>
        <end position="32"/>
    </location>
    <ligand>
        <name>ATP</name>
        <dbReference type="ChEBI" id="CHEBI:30616"/>
    </ligand>
</feature>
<feature type="binding site" evidence="1">
    <location>
        <begin position="86"/>
        <end position="90"/>
    </location>
    <ligand>
        <name>ATP</name>
        <dbReference type="ChEBI" id="CHEBI:30616"/>
    </ligand>
</feature>
<feature type="binding site" evidence="1">
    <location>
        <position position="413"/>
    </location>
    <ligand>
        <name>ATP</name>
        <dbReference type="ChEBI" id="CHEBI:30616"/>
    </ligand>
</feature>
<feature type="binding site" evidence="1">
    <location>
        <position position="494"/>
    </location>
    <ligand>
        <name>ATP</name>
        <dbReference type="ChEBI" id="CHEBI:30616"/>
    </ligand>
</feature>
<name>CH60_FINM2</name>
<keyword id="KW-0067">ATP-binding</keyword>
<keyword id="KW-0143">Chaperone</keyword>
<keyword id="KW-0963">Cytoplasm</keyword>
<keyword id="KW-0413">Isomerase</keyword>
<keyword id="KW-0547">Nucleotide-binding</keyword>
<keyword id="KW-1185">Reference proteome</keyword>
<keyword id="KW-0346">Stress response</keyword>
<gene>
    <name evidence="1" type="primary">groEL</name>
    <name evidence="1" type="synonym">groL</name>
    <name type="ordered locus">FMG_0886</name>
</gene>
<evidence type="ECO:0000255" key="1">
    <source>
        <dbReference type="HAMAP-Rule" id="MF_00600"/>
    </source>
</evidence>
<protein>
    <recommendedName>
        <fullName evidence="1">Chaperonin GroEL</fullName>
        <ecNumber evidence="1">5.6.1.7</ecNumber>
    </recommendedName>
    <alternativeName>
        <fullName evidence="1">60 kDa chaperonin</fullName>
    </alternativeName>
    <alternativeName>
        <fullName evidence="1">Chaperonin-60</fullName>
        <shortName evidence="1">Cpn60</shortName>
    </alternativeName>
</protein>
<accession>B0S1R4</accession>
<proteinExistence type="inferred from homology"/>
<sequence>MAKQIKFSDDARKSMVEGINKLSDTVKVTLGPKGRNVVLDKEYGAPLITNDGVSIAREIELEDEYENMGAQLVKEVATKTNDVAGDGTTTATLLAQAIIREGLKNLAAGANPIVLQKGIKKAVEKSVEAIKARSHSVTTKEEIANVGSVSAADETIGKLIAEAMEKVGNNGVITVEESKSMGTTLNVVEGMEFDRGYVSPYMVSDSDKMVAAMEDPFILVTDRKITNIQDILPLLEQVVQQGKPLFIIAEDVEGEALATLVLNKIRGTFNCVAVKAPGFGDRRKEMLEDICILTGAQLITEDLGIELKDASFDMLGRARKVNVSKDKTTIVDGNGDQSKIEERINQIQNRIPETDSEYDREKLQERLAKLSGGVAVIEVGAATETELKERKLRIEDALAATRAAVEEGIVAGGGTILLDIIEEVEKLVDDVEGDEKTGVKIILKALEEPVKQIAINAGIDGSVIVENVKNKDKGIGFDAYKGEYVDMLKAGIVDPTKVTLSALQNAASVASLLLTTEAAVVTIKKDEPAMPQPGPGAYM</sequence>